<name>RPIA_PARP8</name>
<comment type="function">
    <text evidence="1">Catalyzes the reversible conversion of ribose-5-phosphate to ribulose 5-phosphate.</text>
</comment>
<comment type="catalytic activity">
    <reaction evidence="1">
        <text>aldehydo-D-ribose 5-phosphate = D-ribulose 5-phosphate</text>
        <dbReference type="Rhea" id="RHEA:14657"/>
        <dbReference type="ChEBI" id="CHEBI:58121"/>
        <dbReference type="ChEBI" id="CHEBI:58273"/>
        <dbReference type="EC" id="5.3.1.6"/>
    </reaction>
</comment>
<comment type="pathway">
    <text evidence="1">Carbohydrate degradation; pentose phosphate pathway; D-ribose 5-phosphate from D-ribulose 5-phosphate (non-oxidative stage): step 1/1.</text>
</comment>
<comment type="subunit">
    <text evidence="1">Homodimer.</text>
</comment>
<comment type="similarity">
    <text evidence="1">Belongs to the ribose 5-phosphate isomerase family.</text>
</comment>
<reference key="1">
    <citation type="journal article" date="2014" name="Stand. Genomic Sci.">
        <title>Complete genome sequence of Burkholderia phymatum STM815(T), a broad host range and efficient nitrogen-fixing symbiont of Mimosa species.</title>
        <authorList>
            <person name="Moulin L."/>
            <person name="Klonowska A."/>
            <person name="Caroline B."/>
            <person name="Booth K."/>
            <person name="Vriezen J.A."/>
            <person name="Melkonian R."/>
            <person name="James E.K."/>
            <person name="Young J.P."/>
            <person name="Bena G."/>
            <person name="Hauser L."/>
            <person name="Land M."/>
            <person name="Kyrpides N."/>
            <person name="Bruce D."/>
            <person name="Chain P."/>
            <person name="Copeland A."/>
            <person name="Pitluck S."/>
            <person name="Woyke T."/>
            <person name="Lizotte-Waniewski M."/>
            <person name="Bristow J."/>
            <person name="Riley M."/>
        </authorList>
    </citation>
    <scope>NUCLEOTIDE SEQUENCE [LARGE SCALE GENOMIC DNA]</scope>
    <source>
        <strain>DSM 17167 / CIP 108236 / LMG 21445 / STM815</strain>
    </source>
</reference>
<proteinExistence type="inferred from homology"/>
<accession>B2JKP8</accession>
<keyword id="KW-0413">Isomerase</keyword>
<keyword id="KW-1185">Reference proteome</keyword>
<sequence length="231" mass="24068">MTQDELKQLVGQAAADYVIANVPEGTIIGVGTGSTANCFIDALAAHKARFRGAVSSSVATTARLQSHGIPVFDLNDIESLPVYVDGADEIDHGGAMIKGGGGALTREKIVASVAEKFLCIADASKVVDVLGQFPLPVEVVPMARTAIGRRVTALGGVPIVRVTKDGAPFLTDNGNEIIDVKGLRITDPRTLEAHVNAWPGVVTVGLFAARGADLCLLGTQKGVETIVYPNR</sequence>
<feature type="chain" id="PRO_1000097653" description="Ribose-5-phosphate isomerase A">
    <location>
        <begin position="1"/>
        <end position="231"/>
    </location>
</feature>
<feature type="active site" description="Proton acceptor" evidence="1">
    <location>
        <position position="107"/>
    </location>
</feature>
<feature type="binding site" evidence="1">
    <location>
        <begin position="32"/>
        <end position="35"/>
    </location>
    <ligand>
        <name>substrate</name>
    </ligand>
</feature>
<feature type="binding site" evidence="1">
    <location>
        <begin position="85"/>
        <end position="88"/>
    </location>
    <ligand>
        <name>substrate</name>
    </ligand>
</feature>
<feature type="binding site" evidence="1">
    <location>
        <begin position="98"/>
        <end position="101"/>
    </location>
    <ligand>
        <name>substrate</name>
    </ligand>
</feature>
<feature type="binding site" evidence="1">
    <location>
        <position position="125"/>
    </location>
    <ligand>
        <name>substrate</name>
    </ligand>
</feature>
<gene>
    <name evidence="1" type="primary">rpiA</name>
    <name type="ordered locus">Bphy_1693</name>
</gene>
<protein>
    <recommendedName>
        <fullName evidence="1">Ribose-5-phosphate isomerase A</fullName>
        <ecNumber evidence="1">5.3.1.6</ecNumber>
    </recommendedName>
    <alternativeName>
        <fullName evidence="1">Phosphoriboisomerase A</fullName>
        <shortName evidence="1">PRI</shortName>
    </alternativeName>
</protein>
<organism>
    <name type="scientific">Paraburkholderia phymatum (strain DSM 17167 / CIP 108236 / LMG 21445 / STM815)</name>
    <name type="common">Burkholderia phymatum</name>
    <dbReference type="NCBI Taxonomy" id="391038"/>
    <lineage>
        <taxon>Bacteria</taxon>
        <taxon>Pseudomonadati</taxon>
        <taxon>Pseudomonadota</taxon>
        <taxon>Betaproteobacteria</taxon>
        <taxon>Burkholderiales</taxon>
        <taxon>Burkholderiaceae</taxon>
        <taxon>Paraburkholderia</taxon>
    </lineage>
</organism>
<dbReference type="EC" id="5.3.1.6" evidence="1"/>
<dbReference type="EMBL" id="CP001043">
    <property type="protein sequence ID" value="ACC70875.1"/>
    <property type="molecule type" value="Genomic_DNA"/>
</dbReference>
<dbReference type="RefSeq" id="WP_012401085.1">
    <property type="nucleotide sequence ID" value="NC_010622.1"/>
</dbReference>
<dbReference type="SMR" id="B2JKP8"/>
<dbReference type="STRING" id="391038.Bphy_1693"/>
<dbReference type="KEGG" id="bph:Bphy_1693"/>
<dbReference type="eggNOG" id="COG0120">
    <property type="taxonomic scope" value="Bacteria"/>
</dbReference>
<dbReference type="HOGENOM" id="CLU_056590_1_1_4"/>
<dbReference type="OrthoDB" id="5870696at2"/>
<dbReference type="UniPathway" id="UPA00115">
    <property type="reaction ID" value="UER00412"/>
</dbReference>
<dbReference type="Proteomes" id="UP000001192">
    <property type="component" value="Chromosome 1"/>
</dbReference>
<dbReference type="GO" id="GO:0005829">
    <property type="term" value="C:cytosol"/>
    <property type="evidence" value="ECO:0007669"/>
    <property type="project" value="TreeGrafter"/>
</dbReference>
<dbReference type="GO" id="GO:0004751">
    <property type="term" value="F:ribose-5-phosphate isomerase activity"/>
    <property type="evidence" value="ECO:0007669"/>
    <property type="project" value="UniProtKB-UniRule"/>
</dbReference>
<dbReference type="GO" id="GO:0006014">
    <property type="term" value="P:D-ribose metabolic process"/>
    <property type="evidence" value="ECO:0007669"/>
    <property type="project" value="TreeGrafter"/>
</dbReference>
<dbReference type="GO" id="GO:0009052">
    <property type="term" value="P:pentose-phosphate shunt, non-oxidative branch"/>
    <property type="evidence" value="ECO:0007669"/>
    <property type="project" value="UniProtKB-UniRule"/>
</dbReference>
<dbReference type="CDD" id="cd01398">
    <property type="entry name" value="RPI_A"/>
    <property type="match status" value="1"/>
</dbReference>
<dbReference type="FunFam" id="3.40.50.1360:FF:000001">
    <property type="entry name" value="Ribose-5-phosphate isomerase A"/>
    <property type="match status" value="1"/>
</dbReference>
<dbReference type="Gene3D" id="3.30.70.260">
    <property type="match status" value="1"/>
</dbReference>
<dbReference type="Gene3D" id="3.40.50.1360">
    <property type="match status" value="1"/>
</dbReference>
<dbReference type="HAMAP" id="MF_00170">
    <property type="entry name" value="Rib_5P_isom_A"/>
    <property type="match status" value="1"/>
</dbReference>
<dbReference type="InterPro" id="IPR037171">
    <property type="entry name" value="NagB/RpiA_transferase-like"/>
</dbReference>
<dbReference type="InterPro" id="IPR020672">
    <property type="entry name" value="Ribose5P_isomerase_typA_subgr"/>
</dbReference>
<dbReference type="InterPro" id="IPR004788">
    <property type="entry name" value="Ribose5P_isomerase_type_A"/>
</dbReference>
<dbReference type="NCBIfam" id="NF001924">
    <property type="entry name" value="PRK00702.1"/>
    <property type="match status" value="1"/>
</dbReference>
<dbReference type="NCBIfam" id="TIGR00021">
    <property type="entry name" value="rpiA"/>
    <property type="match status" value="1"/>
</dbReference>
<dbReference type="PANTHER" id="PTHR11934">
    <property type="entry name" value="RIBOSE-5-PHOSPHATE ISOMERASE"/>
    <property type="match status" value="1"/>
</dbReference>
<dbReference type="PANTHER" id="PTHR11934:SF0">
    <property type="entry name" value="RIBOSE-5-PHOSPHATE ISOMERASE"/>
    <property type="match status" value="1"/>
</dbReference>
<dbReference type="Pfam" id="PF06026">
    <property type="entry name" value="Rib_5-P_isom_A"/>
    <property type="match status" value="1"/>
</dbReference>
<dbReference type="SUPFAM" id="SSF75445">
    <property type="entry name" value="D-ribose-5-phosphate isomerase (RpiA), lid domain"/>
    <property type="match status" value="1"/>
</dbReference>
<dbReference type="SUPFAM" id="SSF100950">
    <property type="entry name" value="NagB/RpiA/CoA transferase-like"/>
    <property type="match status" value="1"/>
</dbReference>
<evidence type="ECO:0000255" key="1">
    <source>
        <dbReference type="HAMAP-Rule" id="MF_00170"/>
    </source>
</evidence>